<protein>
    <recommendedName>
        <fullName evidence="5">Inositol polyphosphate multikinase</fullName>
        <ecNumber evidence="1">2.7.1.140</ecNumber>
        <ecNumber evidence="4">2.7.1.151</ecNumber>
        <ecNumber evidence="2">2.7.1.153</ecNumber>
    </recommendedName>
    <alternativeName>
        <fullName>Inositol 1,3,4,6-tetrakisphosphate 5-kinase</fullName>
    </alternativeName>
</protein>
<comment type="function">
    <text evidence="1 2 4">Inositol phosphate kinase with a broad substrate specificity. Phosphorylates inositol 1,4,5-trisphosphate (Ins(1,4,5)P3) first to inositol 1,3,4,5-tetrakisphosphate and then to inositol 1,3,4,5,6-pentakisphosphate (Ins(1,3,4,5,6)P5) (PubMed:15939867). Phosphorylates inositol 1,3,4,6-tetrakisphosphate (Ins(1,3,4,6)P4). Phosphorylates inositol 1,4,5,6-tetrakisphosphate (Ins(1,4,5,6)P4) (By similarity). Phosphorylates glycero-3-phospho-1D-myo-inositol 4,5-bisphosphate to glycero-3-phospho-1D-myo-inositol 3,4,5-trisphosphate (By similarity). Plays an important role in MLKL-mediated necroptosis via its role in the biosynthesis of inositol pentakisphosphate (InsP5) and inositol hexakisphosphate (InsP6). Binding of these highly phosphorylated inositol phosphates to MLKL mediates the release of an N-terminal auto-inhibitory region, leading to activation of the kinase. Essential for activated phospho-MLKL to oligomerize and localize to the cell membrane during necroptosis (By similarity). Required for normal embryonic development, probably via its role in the biosynthesis of inositol 1,3,4,5,6-pentakisphosphate (Ins(1,3,4,5,6)P5) and inositol hexakisphosphate (InsP6) (PubMed:15939867).</text>
</comment>
<comment type="catalytic activity">
    <reaction evidence="4">
        <text>1D-myo-inositol 1,4,5-trisphosphate + 2 ATP = 1D-myo-inositol 1,3,4,5,6-pentakisphosphate + 2 ADP + 2 H(+)</text>
        <dbReference type="Rhea" id="RHEA:32359"/>
        <dbReference type="ChEBI" id="CHEBI:15378"/>
        <dbReference type="ChEBI" id="CHEBI:30616"/>
        <dbReference type="ChEBI" id="CHEBI:57733"/>
        <dbReference type="ChEBI" id="CHEBI:203600"/>
        <dbReference type="ChEBI" id="CHEBI:456216"/>
        <dbReference type="EC" id="2.7.1.151"/>
    </reaction>
</comment>
<comment type="catalytic activity">
    <reaction evidence="1">
        <text>1D-myo-inositol 1,3,4,6-tetrakisphosphate + ATP = 1D-myo-inositol 1,3,4,5,6-pentakisphosphate + ADP + H(+)</text>
        <dbReference type="Rhea" id="RHEA:12717"/>
        <dbReference type="ChEBI" id="CHEBI:15378"/>
        <dbReference type="ChEBI" id="CHEBI:30616"/>
        <dbReference type="ChEBI" id="CHEBI:57660"/>
        <dbReference type="ChEBI" id="CHEBI:57733"/>
        <dbReference type="ChEBI" id="CHEBI:456216"/>
        <dbReference type="EC" id="2.7.1.140"/>
    </reaction>
</comment>
<comment type="catalytic activity">
    <reaction evidence="1">
        <text>1-octadecanoyl-2-(5Z,8Z,11Z,14Z)-eicosatetraenoyl-sn-glycero-3-phospho-1D-myo-inositol 4,5-bisphosphate + ATP = 1-octadecanoyl-2-(5Z,8Z,11Z,14Z-eicosatetraenoyl)-sn-glycero-3-phospho-(1D-myo-inositol 3,4,5-triphosphate) + ADP + H(+)</text>
        <dbReference type="Rhea" id="RHEA:43396"/>
        <dbReference type="ChEBI" id="CHEBI:15378"/>
        <dbReference type="ChEBI" id="CHEBI:30616"/>
        <dbReference type="ChEBI" id="CHEBI:77137"/>
        <dbReference type="ChEBI" id="CHEBI:83243"/>
        <dbReference type="ChEBI" id="CHEBI:456216"/>
    </reaction>
</comment>
<comment type="catalytic activity">
    <reaction evidence="2">
        <text>a 1,2-diacyl-sn-glycero-3-phospho-(1D-myo-inositol-4,5-bisphosphate) + ATP = a 1,2-diacyl-sn-glycero-3-phospho-(1D-myo-inositol-3,4,5-trisphosphate) + ADP + H(+)</text>
        <dbReference type="Rhea" id="RHEA:21292"/>
        <dbReference type="ChEBI" id="CHEBI:15378"/>
        <dbReference type="ChEBI" id="CHEBI:30616"/>
        <dbReference type="ChEBI" id="CHEBI:57836"/>
        <dbReference type="ChEBI" id="CHEBI:58456"/>
        <dbReference type="ChEBI" id="CHEBI:456216"/>
        <dbReference type="EC" id="2.7.1.153"/>
    </reaction>
    <physiologicalReaction direction="left-to-right" evidence="2">
        <dbReference type="Rhea" id="RHEA:21293"/>
    </physiologicalReaction>
</comment>
<comment type="catalytic activity">
    <reaction evidence="2">
        <text>1D-myo-inositol 1,4,5,6-tetrakisphosphate + ATP = 1D-myo-inositol 1,3,4,5,6-pentakisphosphate + ADP + H(+)</text>
        <dbReference type="Rhea" id="RHEA:11856"/>
        <dbReference type="ChEBI" id="CHEBI:15378"/>
        <dbReference type="ChEBI" id="CHEBI:30616"/>
        <dbReference type="ChEBI" id="CHEBI:57627"/>
        <dbReference type="ChEBI" id="CHEBI:57733"/>
        <dbReference type="ChEBI" id="CHEBI:456216"/>
    </reaction>
</comment>
<comment type="cofactor">
    <cofactor evidence="1">
        <name>Mg(2+)</name>
        <dbReference type="ChEBI" id="CHEBI:18420"/>
    </cofactor>
    <text evidence="1">Binds two Mg(2+), but the interaction with the protein is mostly indirect.</text>
</comment>
<comment type="pathway">
    <text evidence="4">Phospholipid metabolism; phosphatidylinositol metabolism.</text>
</comment>
<comment type="subcellular location">
    <subcellularLocation>
        <location evidence="1">Nucleus</location>
    </subcellularLocation>
</comment>
<comment type="alternative products">
    <event type="alternative splicing"/>
    <isoform>
        <id>Q7TT16-1</id>
        <name>1</name>
        <sequence type="displayed"/>
    </isoform>
    <isoform>
        <id>Q7TT16-2</id>
        <name>2</name>
        <sequence type="described" ref="VSP_010923 VSP_010924"/>
    </isoform>
</comment>
<comment type="similarity">
    <text evidence="7">Belongs to the inositol phosphokinase (IPK) family.</text>
</comment>
<sequence>MAAEPPALRLRPPGSTGDSPPVPRLLGGCVPLSHQVAGHMYGKDKVGILQHPDGTVLKQLQPPPRGPRELEFYTMVYAADCADAVLLELRKHLPKYYGVWSPPTAPNDVYLKLEDVTHKFNKPCIMDVKIGRKSYDPFASSEKIQQQVSKYPLMEEIGFLVLGMRVYHLHSDSYETQNQHYGRGLTKETLKEGVSKFFHNGFCLRKDAIAASIQKVEKILQWFENQKQLNFYASSLLFVYEGSSQPATTKANDRTLAGRFLSKGPLTDADGLECNNNFHLFGAPPNGMSVGKSLSKAYSRHRKLYAKKHQSQTSLKVETLEQDNGWRSMSQEHLNGNVLAQLEKVFYHLPAGRPEIPEAEVRMIDFAHVFPSNTVDEGYVYGLKHLIAVLRSILDS</sequence>
<feature type="initiator methionine" description="Removed" evidence="1">
    <location>
        <position position="1"/>
    </location>
</feature>
<feature type="chain" id="PRO_0000066871" description="Inositol polyphosphate multikinase">
    <location>
        <begin position="2"/>
        <end position="396"/>
    </location>
</feature>
<feature type="region of interest" description="Disordered" evidence="3">
    <location>
        <begin position="1"/>
        <end position="22"/>
    </location>
</feature>
<feature type="short sequence motif" description="Nuclear localization signal" evidence="1">
    <location>
        <begin position="300"/>
        <end position="310"/>
    </location>
</feature>
<feature type="compositionally biased region" description="Low complexity" evidence="3">
    <location>
        <begin position="1"/>
        <end position="13"/>
    </location>
</feature>
<feature type="binding site" evidence="1">
    <location>
        <position position="58"/>
    </location>
    <ligand>
        <name>ATP</name>
        <dbReference type="ChEBI" id="CHEBI:30616"/>
    </ligand>
</feature>
<feature type="binding site" evidence="1">
    <location>
        <position position="65"/>
    </location>
    <ligand>
        <name>substrate</name>
    </ligand>
</feature>
<feature type="binding site" evidence="1">
    <location>
        <begin position="114"/>
        <end position="116"/>
    </location>
    <ligand>
        <name>ATP</name>
        <dbReference type="ChEBI" id="CHEBI:30616"/>
    </ligand>
</feature>
<feature type="binding site" evidence="1">
    <location>
        <position position="127"/>
    </location>
    <ligand>
        <name>ATP</name>
        <dbReference type="ChEBI" id="CHEBI:30616"/>
    </ligand>
</feature>
<feature type="binding site" evidence="1">
    <location>
        <position position="129"/>
    </location>
    <ligand>
        <name>substrate</name>
    </ligand>
</feature>
<feature type="binding site" evidence="1">
    <location>
        <begin position="143"/>
        <end position="150"/>
    </location>
    <ligand>
        <name>substrate</name>
    </ligand>
</feature>
<feature type="binding site" evidence="1">
    <location>
        <position position="179"/>
    </location>
    <ligand>
        <name>substrate</name>
    </ligand>
</feature>
<feature type="binding site" evidence="1">
    <location>
        <position position="365"/>
    </location>
    <ligand>
        <name>ATP</name>
        <dbReference type="ChEBI" id="CHEBI:30616"/>
    </ligand>
</feature>
<feature type="modified residue" description="N-acetylalanine" evidence="1">
    <location>
        <position position="2"/>
    </location>
</feature>
<feature type="modified residue" description="Phosphoserine" evidence="8">
    <location>
        <position position="19"/>
    </location>
</feature>
<feature type="splice variant" id="VSP_010923" description="In isoform 2." evidence="6">
    <original>VSKFFHNGFCLRKDAIAASIQKV</original>
    <variation>EPWSGAAAAVSKMALTRFSSPLE</variation>
    <location>
        <begin position="194"/>
        <end position="216"/>
    </location>
</feature>
<feature type="splice variant" id="VSP_010924" description="In isoform 2." evidence="6">
    <location>
        <begin position="217"/>
        <end position="396"/>
    </location>
</feature>
<feature type="sequence conflict" description="In Ref. 1; BAC29655." evidence="7" ref="1">
    <original>V</original>
    <variation>D</variation>
    <location>
        <position position="56"/>
    </location>
</feature>
<feature type="sequence conflict" description="In Ref. 1; BAC29655." evidence="7" ref="1">
    <original>N</original>
    <variation>I</variation>
    <location>
        <position position="121"/>
    </location>
</feature>
<feature type="sequence conflict" description="In Ref. 1; BAC29655." evidence="7" ref="1">
    <original>L</original>
    <variation>I</variation>
    <location>
        <position position="204"/>
    </location>
</feature>
<feature type="sequence conflict" description="In Ref. 1; BAC29655." evidence="7" ref="1">
    <original>D</original>
    <variation>G</variation>
    <location>
        <position position="207"/>
    </location>
</feature>
<name>IPMK_MOUSE</name>
<evidence type="ECO:0000250" key="1">
    <source>
        <dbReference type="UniProtKB" id="Q8NFU5"/>
    </source>
</evidence>
<evidence type="ECO:0000250" key="2">
    <source>
        <dbReference type="UniProtKB" id="Q99NI4"/>
    </source>
</evidence>
<evidence type="ECO:0000256" key="3">
    <source>
        <dbReference type="SAM" id="MobiDB-lite"/>
    </source>
</evidence>
<evidence type="ECO:0000269" key="4">
    <source>
    </source>
</evidence>
<evidence type="ECO:0000303" key="5">
    <source>
    </source>
</evidence>
<evidence type="ECO:0000303" key="6">
    <source>
    </source>
</evidence>
<evidence type="ECO:0000305" key="7"/>
<evidence type="ECO:0007744" key="8">
    <source>
    </source>
</evidence>
<organism>
    <name type="scientific">Mus musculus</name>
    <name type="common">Mouse</name>
    <dbReference type="NCBI Taxonomy" id="10090"/>
    <lineage>
        <taxon>Eukaryota</taxon>
        <taxon>Metazoa</taxon>
        <taxon>Chordata</taxon>
        <taxon>Craniata</taxon>
        <taxon>Vertebrata</taxon>
        <taxon>Euteleostomi</taxon>
        <taxon>Mammalia</taxon>
        <taxon>Eutheria</taxon>
        <taxon>Euarchontoglires</taxon>
        <taxon>Glires</taxon>
        <taxon>Rodentia</taxon>
        <taxon>Myomorpha</taxon>
        <taxon>Muroidea</taxon>
        <taxon>Muridae</taxon>
        <taxon>Murinae</taxon>
        <taxon>Mus</taxon>
        <taxon>Mus</taxon>
    </lineage>
</organism>
<reference key="1">
    <citation type="journal article" date="2005" name="Science">
        <title>The transcriptional landscape of the mammalian genome.</title>
        <authorList>
            <person name="Carninci P."/>
            <person name="Kasukawa T."/>
            <person name="Katayama S."/>
            <person name="Gough J."/>
            <person name="Frith M.C."/>
            <person name="Maeda N."/>
            <person name="Oyama R."/>
            <person name="Ravasi T."/>
            <person name="Lenhard B."/>
            <person name="Wells C."/>
            <person name="Kodzius R."/>
            <person name="Shimokawa K."/>
            <person name="Bajic V.B."/>
            <person name="Brenner S.E."/>
            <person name="Batalov S."/>
            <person name="Forrest A.R."/>
            <person name="Zavolan M."/>
            <person name="Davis M.J."/>
            <person name="Wilming L.G."/>
            <person name="Aidinis V."/>
            <person name="Allen J.E."/>
            <person name="Ambesi-Impiombato A."/>
            <person name="Apweiler R."/>
            <person name="Aturaliya R.N."/>
            <person name="Bailey T.L."/>
            <person name="Bansal M."/>
            <person name="Baxter L."/>
            <person name="Beisel K.W."/>
            <person name="Bersano T."/>
            <person name="Bono H."/>
            <person name="Chalk A.M."/>
            <person name="Chiu K.P."/>
            <person name="Choudhary V."/>
            <person name="Christoffels A."/>
            <person name="Clutterbuck D.R."/>
            <person name="Crowe M.L."/>
            <person name="Dalla E."/>
            <person name="Dalrymple B.P."/>
            <person name="de Bono B."/>
            <person name="Della Gatta G."/>
            <person name="di Bernardo D."/>
            <person name="Down T."/>
            <person name="Engstrom P."/>
            <person name="Fagiolini M."/>
            <person name="Faulkner G."/>
            <person name="Fletcher C.F."/>
            <person name="Fukushima T."/>
            <person name="Furuno M."/>
            <person name="Futaki S."/>
            <person name="Gariboldi M."/>
            <person name="Georgii-Hemming P."/>
            <person name="Gingeras T.R."/>
            <person name="Gojobori T."/>
            <person name="Green R.E."/>
            <person name="Gustincich S."/>
            <person name="Harbers M."/>
            <person name="Hayashi Y."/>
            <person name="Hensch T.K."/>
            <person name="Hirokawa N."/>
            <person name="Hill D."/>
            <person name="Huminiecki L."/>
            <person name="Iacono M."/>
            <person name="Ikeo K."/>
            <person name="Iwama A."/>
            <person name="Ishikawa T."/>
            <person name="Jakt M."/>
            <person name="Kanapin A."/>
            <person name="Katoh M."/>
            <person name="Kawasawa Y."/>
            <person name="Kelso J."/>
            <person name="Kitamura H."/>
            <person name="Kitano H."/>
            <person name="Kollias G."/>
            <person name="Krishnan S.P."/>
            <person name="Kruger A."/>
            <person name="Kummerfeld S.K."/>
            <person name="Kurochkin I.V."/>
            <person name="Lareau L.F."/>
            <person name="Lazarevic D."/>
            <person name="Lipovich L."/>
            <person name="Liu J."/>
            <person name="Liuni S."/>
            <person name="McWilliam S."/>
            <person name="Madan Babu M."/>
            <person name="Madera M."/>
            <person name="Marchionni L."/>
            <person name="Matsuda H."/>
            <person name="Matsuzawa S."/>
            <person name="Miki H."/>
            <person name="Mignone F."/>
            <person name="Miyake S."/>
            <person name="Morris K."/>
            <person name="Mottagui-Tabar S."/>
            <person name="Mulder N."/>
            <person name="Nakano N."/>
            <person name="Nakauchi H."/>
            <person name="Ng P."/>
            <person name="Nilsson R."/>
            <person name="Nishiguchi S."/>
            <person name="Nishikawa S."/>
            <person name="Nori F."/>
            <person name="Ohara O."/>
            <person name="Okazaki Y."/>
            <person name="Orlando V."/>
            <person name="Pang K.C."/>
            <person name="Pavan W.J."/>
            <person name="Pavesi G."/>
            <person name="Pesole G."/>
            <person name="Petrovsky N."/>
            <person name="Piazza S."/>
            <person name="Reed J."/>
            <person name="Reid J.F."/>
            <person name="Ring B.Z."/>
            <person name="Ringwald M."/>
            <person name="Rost B."/>
            <person name="Ruan Y."/>
            <person name="Salzberg S.L."/>
            <person name="Sandelin A."/>
            <person name="Schneider C."/>
            <person name="Schoenbach C."/>
            <person name="Sekiguchi K."/>
            <person name="Semple C.A."/>
            <person name="Seno S."/>
            <person name="Sessa L."/>
            <person name="Sheng Y."/>
            <person name="Shibata Y."/>
            <person name="Shimada H."/>
            <person name="Shimada K."/>
            <person name="Silva D."/>
            <person name="Sinclair B."/>
            <person name="Sperling S."/>
            <person name="Stupka E."/>
            <person name="Sugiura K."/>
            <person name="Sultana R."/>
            <person name="Takenaka Y."/>
            <person name="Taki K."/>
            <person name="Tammoja K."/>
            <person name="Tan S.L."/>
            <person name="Tang S."/>
            <person name="Taylor M.S."/>
            <person name="Tegner J."/>
            <person name="Teichmann S.A."/>
            <person name="Ueda H.R."/>
            <person name="van Nimwegen E."/>
            <person name="Verardo R."/>
            <person name="Wei C.L."/>
            <person name="Yagi K."/>
            <person name="Yamanishi H."/>
            <person name="Zabarovsky E."/>
            <person name="Zhu S."/>
            <person name="Zimmer A."/>
            <person name="Hide W."/>
            <person name="Bult C."/>
            <person name="Grimmond S.M."/>
            <person name="Teasdale R.D."/>
            <person name="Liu E.T."/>
            <person name="Brusic V."/>
            <person name="Quackenbush J."/>
            <person name="Wahlestedt C."/>
            <person name="Mattick J.S."/>
            <person name="Hume D.A."/>
            <person name="Kai C."/>
            <person name="Sasaki D."/>
            <person name="Tomaru Y."/>
            <person name="Fukuda S."/>
            <person name="Kanamori-Katayama M."/>
            <person name="Suzuki M."/>
            <person name="Aoki J."/>
            <person name="Arakawa T."/>
            <person name="Iida J."/>
            <person name="Imamura K."/>
            <person name="Itoh M."/>
            <person name="Kato T."/>
            <person name="Kawaji H."/>
            <person name="Kawagashira N."/>
            <person name="Kawashima T."/>
            <person name="Kojima M."/>
            <person name="Kondo S."/>
            <person name="Konno H."/>
            <person name="Nakano K."/>
            <person name="Ninomiya N."/>
            <person name="Nishio T."/>
            <person name="Okada M."/>
            <person name="Plessy C."/>
            <person name="Shibata K."/>
            <person name="Shiraki T."/>
            <person name="Suzuki S."/>
            <person name="Tagami M."/>
            <person name="Waki K."/>
            <person name="Watahiki A."/>
            <person name="Okamura-Oho Y."/>
            <person name="Suzuki H."/>
            <person name="Kawai J."/>
            <person name="Hayashizaki Y."/>
        </authorList>
    </citation>
    <scope>NUCLEOTIDE SEQUENCE [LARGE SCALE MRNA] (ISOFORMS 1 AND 2)</scope>
    <source>
        <strain>C57BL/6J</strain>
        <tissue>Cerebellum</tissue>
        <tissue>Embryonic stem cell</tissue>
        <tissue>Vagina</tissue>
    </source>
</reference>
<reference key="2">
    <citation type="journal article" date="2004" name="Genome Res.">
        <title>The status, quality, and expansion of the NIH full-length cDNA project: the Mammalian Gene Collection (MGC).</title>
        <authorList>
            <consortium name="The MGC Project Team"/>
        </authorList>
    </citation>
    <scope>NUCLEOTIDE SEQUENCE [LARGE SCALE MRNA] (ISOFORM 1)</scope>
    <source>
        <strain>C57BL/6J</strain>
        <tissue>Brain</tissue>
    </source>
</reference>
<reference key="3">
    <citation type="journal article" date="2005" name="Proc. Natl. Acad. Sci. U.S.A.">
        <title>An essential role for an inositol polyphosphate multikinase, Ipk2, in mouse embryogenesis and second messenger production.</title>
        <authorList>
            <person name="Frederick J.P."/>
            <person name="Mattiske D."/>
            <person name="Wofford J.A."/>
            <person name="Megosh L.C."/>
            <person name="Drake L.Y."/>
            <person name="Chiou S.T."/>
            <person name="Hogan B.L."/>
            <person name="York J.D."/>
        </authorList>
    </citation>
    <scope>FUNCTION</scope>
    <scope>CATALYTIC ACTIVITY</scope>
    <scope>PATHWAY</scope>
</reference>
<reference key="4">
    <citation type="journal article" date="2010" name="Cell">
        <title>A tissue-specific atlas of mouse protein phosphorylation and expression.</title>
        <authorList>
            <person name="Huttlin E.L."/>
            <person name="Jedrychowski M.P."/>
            <person name="Elias J.E."/>
            <person name="Goswami T."/>
            <person name="Rad R."/>
            <person name="Beausoleil S.A."/>
            <person name="Villen J."/>
            <person name="Haas W."/>
            <person name="Sowa M.E."/>
            <person name="Gygi S.P."/>
        </authorList>
    </citation>
    <scope>PHOSPHORYLATION [LARGE SCALE ANALYSIS] AT SER-19</scope>
    <scope>IDENTIFICATION BY MASS SPECTROMETRY [LARGE SCALE ANALYSIS]</scope>
    <source>
        <tissue>Kidney</tissue>
    </source>
</reference>
<accession>Q7TT16</accession>
<accession>Q8BZ11</accession>
<accession>Q8BZA8</accession>
<accession>Q9CWM9</accession>
<keyword id="KW-0007">Acetylation</keyword>
<keyword id="KW-0025">Alternative splicing</keyword>
<keyword id="KW-0067">ATP-binding</keyword>
<keyword id="KW-0418">Kinase</keyword>
<keyword id="KW-0443">Lipid metabolism</keyword>
<keyword id="KW-0460">Magnesium</keyword>
<keyword id="KW-0479">Metal-binding</keyword>
<keyword id="KW-0547">Nucleotide-binding</keyword>
<keyword id="KW-0539">Nucleus</keyword>
<keyword id="KW-1208">Phospholipid metabolism</keyword>
<keyword id="KW-0597">Phosphoprotein</keyword>
<keyword id="KW-1185">Reference proteome</keyword>
<keyword id="KW-0808">Transferase</keyword>
<proteinExistence type="evidence at protein level"/>
<dbReference type="EC" id="2.7.1.140" evidence="1"/>
<dbReference type="EC" id="2.7.1.151" evidence="4"/>
<dbReference type="EC" id="2.7.1.153" evidence="2"/>
<dbReference type="EMBL" id="AK010523">
    <property type="protein sequence ID" value="BAB27004.1"/>
    <property type="molecule type" value="mRNA"/>
</dbReference>
<dbReference type="EMBL" id="AK036084">
    <property type="protein sequence ID" value="BAC29300.1"/>
    <property type="molecule type" value="mRNA"/>
</dbReference>
<dbReference type="EMBL" id="AK036978">
    <property type="protein sequence ID" value="BAC29655.1"/>
    <property type="molecule type" value="mRNA"/>
</dbReference>
<dbReference type="EMBL" id="BC052463">
    <property type="protein sequence ID" value="AAH52463.1"/>
    <property type="molecule type" value="mRNA"/>
</dbReference>
<dbReference type="CCDS" id="CCDS23918.1">
    <molecule id="Q7TT16-1"/>
</dbReference>
<dbReference type="RefSeq" id="NP_001334120.1">
    <property type="nucleotide sequence ID" value="NM_001347191.1"/>
</dbReference>
<dbReference type="RefSeq" id="NP_081460.1">
    <molecule id="Q7TT16-1"/>
    <property type="nucleotide sequence ID" value="NM_027184.3"/>
</dbReference>
<dbReference type="SMR" id="Q7TT16"/>
<dbReference type="FunCoup" id="Q7TT16">
    <property type="interactions" value="2865"/>
</dbReference>
<dbReference type="STRING" id="10090.ENSMUSP00000112568"/>
<dbReference type="iPTMnet" id="Q7TT16"/>
<dbReference type="PhosphoSitePlus" id="Q7TT16"/>
<dbReference type="PaxDb" id="10090-ENSMUSP00000078240"/>
<dbReference type="ProteomicsDB" id="301657">
    <molecule id="Q7TT16-1"/>
</dbReference>
<dbReference type="ProteomicsDB" id="301658">
    <molecule id="Q7TT16-2"/>
</dbReference>
<dbReference type="Antibodypedia" id="28039">
    <property type="antibodies" value="192 antibodies from 27 providers"/>
</dbReference>
<dbReference type="DNASU" id="69718"/>
<dbReference type="Ensembl" id="ENSMUST00000079252.13">
    <molecule id="Q7TT16-1"/>
    <property type="protein sequence ID" value="ENSMUSP00000078240.7"/>
    <property type="gene ID" value="ENSMUSG00000060733.14"/>
</dbReference>
<dbReference type="Ensembl" id="ENSMUST00000118381.8">
    <molecule id="Q7TT16-2"/>
    <property type="protein sequence ID" value="ENSMUSP00000113083.2"/>
    <property type="gene ID" value="ENSMUSG00000060733.14"/>
</dbReference>
<dbReference type="Ensembl" id="ENSMUST00000147277.8">
    <molecule id="Q7TT16-2"/>
    <property type="protein sequence ID" value="ENSMUSP00000120073.2"/>
    <property type="gene ID" value="ENSMUSG00000060733.14"/>
</dbReference>
<dbReference type="GeneID" id="69718"/>
<dbReference type="KEGG" id="mmu:69718"/>
<dbReference type="UCSC" id="uc007for.1">
    <molecule id="Q7TT16-2"/>
    <property type="organism name" value="mouse"/>
</dbReference>
<dbReference type="UCSC" id="uc007fos.1">
    <molecule id="Q7TT16-1"/>
    <property type="organism name" value="mouse"/>
</dbReference>
<dbReference type="AGR" id="MGI:1916968"/>
<dbReference type="CTD" id="253430"/>
<dbReference type="MGI" id="MGI:1916968">
    <property type="gene designation" value="Ipmk"/>
</dbReference>
<dbReference type="VEuPathDB" id="HostDB:ENSMUSG00000060733"/>
<dbReference type="eggNOG" id="KOG1620">
    <property type="taxonomic scope" value="Eukaryota"/>
</dbReference>
<dbReference type="GeneTree" id="ENSGT00940000155309"/>
<dbReference type="HOGENOM" id="CLU_042569_0_0_1"/>
<dbReference type="InParanoid" id="Q7TT16"/>
<dbReference type="OrthoDB" id="338650at2759"/>
<dbReference type="PhylomeDB" id="Q7TT16"/>
<dbReference type="TreeFam" id="TF321442"/>
<dbReference type="BRENDA" id="2.7.1.151">
    <property type="organism ID" value="3474"/>
</dbReference>
<dbReference type="Reactome" id="R-MMU-1855191">
    <property type="pathway name" value="Synthesis of IPs in the nucleus"/>
</dbReference>
<dbReference type="UniPathway" id="UPA00949"/>
<dbReference type="BioGRID-ORCS" id="69718">
    <property type="hits" value="8 hits in 79 CRISPR screens"/>
</dbReference>
<dbReference type="ChiTaRS" id="Ipmk">
    <property type="organism name" value="mouse"/>
</dbReference>
<dbReference type="PRO" id="PR:Q7TT16"/>
<dbReference type="Proteomes" id="UP000000589">
    <property type="component" value="Chromosome 10"/>
</dbReference>
<dbReference type="RNAct" id="Q7TT16">
    <property type="molecule type" value="protein"/>
</dbReference>
<dbReference type="Bgee" id="ENSMUSG00000060733">
    <property type="expression patterns" value="Expressed in animal zygote and 229 other cell types or tissues"/>
</dbReference>
<dbReference type="ExpressionAtlas" id="Q7TT16">
    <property type="expression patterns" value="baseline and differential"/>
</dbReference>
<dbReference type="GO" id="GO:0005634">
    <property type="term" value="C:nucleus"/>
    <property type="evidence" value="ECO:0000250"/>
    <property type="project" value="UniProtKB"/>
</dbReference>
<dbReference type="GO" id="GO:0046934">
    <property type="term" value="F:1-phosphatidylinositol-4,5-bisphosphate 3-kinase activity"/>
    <property type="evidence" value="ECO:0000250"/>
    <property type="project" value="UniProtKB"/>
</dbReference>
<dbReference type="GO" id="GO:0005524">
    <property type="term" value="F:ATP binding"/>
    <property type="evidence" value="ECO:0007669"/>
    <property type="project" value="UniProtKB-KW"/>
</dbReference>
<dbReference type="GO" id="GO:0000825">
    <property type="term" value="F:inositol-1,3,4,5-tetrakisphosphate 6-kinase activity"/>
    <property type="evidence" value="ECO:0000250"/>
    <property type="project" value="UniProtKB"/>
</dbReference>
<dbReference type="GO" id="GO:0047326">
    <property type="term" value="F:inositol-1,3,4,6-tetrakisphosphate 5-kinase activity"/>
    <property type="evidence" value="ECO:0000250"/>
    <property type="project" value="UniProtKB"/>
</dbReference>
<dbReference type="GO" id="GO:0000824">
    <property type="term" value="F:inositol-1,4,5,6-tetrakisphosphate 3-kinase activity"/>
    <property type="evidence" value="ECO:0000315"/>
    <property type="project" value="MGI"/>
</dbReference>
<dbReference type="GO" id="GO:0008440">
    <property type="term" value="F:inositol-1,4,5-trisphosphate 3-kinase activity"/>
    <property type="evidence" value="ECO:0000315"/>
    <property type="project" value="MGI"/>
</dbReference>
<dbReference type="GO" id="GO:0000823">
    <property type="term" value="F:inositol-1,4,5-trisphosphate 6-kinase activity"/>
    <property type="evidence" value="ECO:0000250"/>
    <property type="project" value="UniProtKB"/>
</dbReference>
<dbReference type="GO" id="GO:0046872">
    <property type="term" value="F:metal ion binding"/>
    <property type="evidence" value="ECO:0007669"/>
    <property type="project" value="UniProtKB-KW"/>
</dbReference>
<dbReference type="GO" id="GO:0032958">
    <property type="term" value="P:inositol phosphate biosynthetic process"/>
    <property type="evidence" value="ECO:0000315"/>
    <property type="project" value="MGI"/>
</dbReference>
<dbReference type="GO" id="GO:0070266">
    <property type="term" value="P:necroptotic process"/>
    <property type="evidence" value="ECO:0000250"/>
    <property type="project" value="UniProtKB"/>
</dbReference>
<dbReference type="GO" id="GO:0001841">
    <property type="term" value="P:neural tube formation"/>
    <property type="evidence" value="ECO:0000315"/>
    <property type="project" value="MGI"/>
</dbReference>
<dbReference type="GO" id="GO:0046488">
    <property type="term" value="P:phosphatidylinositol metabolic process"/>
    <property type="evidence" value="ECO:0007669"/>
    <property type="project" value="UniProtKB-UniPathway"/>
</dbReference>
<dbReference type="Gene3D" id="3.30.470.160">
    <property type="entry name" value="Inositol polyphosphate kinase"/>
    <property type="match status" value="1"/>
</dbReference>
<dbReference type="InterPro" id="IPR005522">
    <property type="entry name" value="IPK"/>
</dbReference>
<dbReference type="InterPro" id="IPR038286">
    <property type="entry name" value="IPK_sf"/>
</dbReference>
<dbReference type="PANTHER" id="PTHR12400">
    <property type="entry name" value="INOSITOL POLYPHOSPHATE KINASE"/>
    <property type="match status" value="1"/>
</dbReference>
<dbReference type="PANTHER" id="PTHR12400:SF51">
    <property type="entry name" value="INOSITOL POLYPHOSPHATE MULTIKINASE"/>
    <property type="match status" value="1"/>
</dbReference>
<dbReference type="Pfam" id="PF03770">
    <property type="entry name" value="IPK"/>
    <property type="match status" value="1"/>
</dbReference>
<dbReference type="SUPFAM" id="SSF56104">
    <property type="entry name" value="SAICAR synthase-like"/>
    <property type="match status" value="1"/>
</dbReference>
<gene>
    <name type="primary">Ipmk</name>
    <name type="synonym">Impk</name>
    <name evidence="5" type="synonym">Ipk2</name>
</gene>